<name>PAHO_MACMU</name>
<dbReference type="PIR" id="C60071">
    <property type="entry name" value="C60071"/>
</dbReference>
<dbReference type="SMR" id="P33684"/>
<dbReference type="STRING" id="9544.ENSMMUP00000074126"/>
<dbReference type="PaxDb" id="9544-ENSMMUP00000004281"/>
<dbReference type="eggNOG" id="ENOG502TD4B">
    <property type="taxonomic scope" value="Eukaryota"/>
</dbReference>
<dbReference type="HOGENOM" id="CLU_165150_1_0_1"/>
<dbReference type="InParanoid" id="P33684"/>
<dbReference type="Proteomes" id="UP000006718">
    <property type="component" value="Unassembled WGS sequence"/>
</dbReference>
<dbReference type="GO" id="GO:0005576">
    <property type="term" value="C:extracellular region"/>
    <property type="evidence" value="ECO:0007669"/>
    <property type="project" value="UniProtKB-SubCell"/>
</dbReference>
<dbReference type="GO" id="GO:0005179">
    <property type="term" value="F:hormone activity"/>
    <property type="evidence" value="ECO:0007669"/>
    <property type="project" value="UniProtKB-KW"/>
</dbReference>
<dbReference type="CDD" id="cd00126">
    <property type="entry name" value="PAH"/>
    <property type="match status" value="1"/>
</dbReference>
<dbReference type="Gene3D" id="6.10.250.900">
    <property type="match status" value="1"/>
</dbReference>
<dbReference type="InterPro" id="IPR001955">
    <property type="entry name" value="Pancreatic_hormone-like"/>
</dbReference>
<dbReference type="InterPro" id="IPR020392">
    <property type="entry name" value="Pancreatic_hormone-like_CS"/>
</dbReference>
<dbReference type="PANTHER" id="PTHR10533">
    <property type="entry name" value="NEUROPEPTIDE Y/PANCREATIC HORMONE/PEPTIDE YY"/>
    <property type="match status" value="1"/>
</dbReference>
<dbReference type="PANTHER" id="PTHR10533:SF2">
    <property type="entry name" value="PANCREATIC POLYPEPTIDE PROHORMONE"/>
    <property type="match status" value="1"/>
</dbReference>
<dbReference type="Pfam" id="PF00159">
    <property type="entry name" value="Hormone_3"/>
    <property type="match status" value="1"/>
</dbReference>
<dbReference type="PRINTS" id="PR00278">
    <property type="entry name" value="PANCHORMONE"/>
</dbReference>
<dbReference type="SMART" id="SM00309">
    <property type="entry name" value="PAH"/>
    <property type="match status" value="1"/>
</dbReference>
<dbReference type="PROSITE" id="PS00265">
    <property type="entry name" value="PANCREATIC_HORMONE_1"/>
    <property type="match status" value="1"/>
</dbReference>
<dbReference type="PROSITE" id="PS50276">
    <property type="entry name" value="PANCREATIC_HORMONE_2"/>
    <property type="match status" value="1"/>
</dbReference>
<evidence type="ECO:0000250" key="1"/>
<evidence type="ECO:0000250" key="2">
    <source>
        <dbReference type="UniProtKB" id="P01298"/>
    </source>
</evidence>
<evidence type="ECO:0000303" key="3">
    <source>
    </source>
</evidence>
<evidence type="ECO:0000305" key="4"/>
<comment type="function">
    <text evidence="2">Hormone secreted by pancreatic cells that acts as a regulator of pancreatic and gastrointestinal functions probably by signaling through the G protein-coupled receptor NPY4R2.</text>
</comment>
<comment type="subcellular location">
    <subcellularLocation>
        <location evidence="2">Secreted</location>
    </subcellularLocation>
</comment>
<comment type="similarity">
    <text evidence="4">Belongs to the NPY family.</text>
</comment>
<organism>
    <name type="scientific">Macaca mulatta</name>
    <name type="common">Rhesus macaque</name>
    <dbReference type="NCBI Taxonomy" id="9544"/>
    <lineage>
        <taxon>Eukaryota</taxon>
        <taxon>Metazoa</taxon>
        <taxon>Chordata</taxon>
        <taxon>Craniata</taxon>
        <taxon>Vertebrata</taxon>
        <taxon>Euteleostomi</taxon>
        <taxon>Mammalia</taxon>
        <taxon>Eutheria</taxon>
        <taxon>Euarchontoglires</taxon>
        <taxon>Primates</taxon>
        <taxon>Haplorrhini</taxon>
        <taxon>Catarrhini</taxon>
        <taxon>Cercopithecidae</taxon>
        <taxon>Cercopithecinae</taxon>
        <taxon>Macaca</taxon>
    </lineage>
</organism>
<gene>
    <name type="primary">PPY</name>
</gene>
<keyword id="KW-0027">Amidation</keyword>
<keyword id="KW-0903">Direct protein sequencing</keyword>
<keyword id="KW-0372">Hormone</keyword>
<keyword id="KW-1185">Reference proteome</keyword>
<keyword id="KW-0964">Secreted</keyword>
<sequence>APLEPVYPGDNATPEQMAQYAADLRRYINMLTRPRY</sequence>
<accession>P33684</accession>
<proteinExistence type="evidence at protein level"/>
<protein>
    <recommendedName>
        <fullName evidence="3">Pancreatic polypeptide</fullName>
        <shortName evidence="3">PP</shortName>
    </recommendedName>
</protein>
<reference key="1">
    <citation type="journal article" date="1991" name="Regul. Pept.">
        <title>Rhesus monkey gastroenteropancreatic hormones: relationship to human sequences.</title>
        <authorList>
            <person name="Yu J.-H."/>
            <person name="Xin Y."/>
            <person name="Eng J."/>
            <person name="Yalow R.S."/>
        </authorList>
    </citation>
    <scope>PROTEIN SEQUENCE</scope>
</reference>
<feature type="peptide" id="PRO_0000044800" description="Pancreatic polypeptide">
    <location>
        <begin position="1"/>
        <end position="36"/>
    </location>
</feature>
<feature type="modified residue" description="Tyrosine amide" evidence="1">
    <location>
        <position position="36"/>
    </location>
</feature>